<protein>
    <recommendedName>
        <fullName>Uncharacterized oxidoreductase YfiI</fullName>
        <ecNumber>1.-.-.-</ecNumber>
    </recommendedName>
</protein>
<feature type="chain" id="PRO_0000360651" description="Uncharacterized oxidoreductase YfiI">
    <location>
        <begin position="1"/>
        <end position="393"/>
    </location>
</feature>
<keyword id="KW-0560">Oxidoreductase</keyword>
<keyword id="KW-1185">Reference proteome</keyword>
<gene>
    <name type="primary">yfiI</name>
    <name type="ordered locus">BSU08280</name>
</gene>
<organism>
    <name type="scientific">Bacillus subtilis (strain 168)</name>
    <dbReference type="NCBI Taxonomy" id="224308"/>
    <lineage>
        <taxon>Bacteria</taxon>
        <taxon>Bacillati</taxon>
        <taxon>Bacillota</taxon>
        <taxon>Bacilli</taxon>
        <taxon>Bacillales</taxon>
        <taxon>Bacillaceae</taxon>
        <taxon>Bacillus</taxon>
    </lineage>
</organism>
<evidence type="ECO:0000305" key="1"/>
<name>YFII_BACSU</name>
<proteinExistence type="inferred from homology"/>
<comment type="similarity">
    <text evidence="1">Belongs to the Gfo/Idh/MocA family.</text>
</comment>
<accession>P94437</accession>
<accession>Q797A0</accession>
<dbReference type="EC" id="1.-.-.-"/>
<dbReference type="EMBL" id="D78508">
    <property type="protein sequence ID" value="BAA11399.1"/>
    <property type="molecule type" value="Genomic_DNA"/>
</dbReference>
<dbReference type="EMBL" id="AL009126">
    <property type="protein sequence ID" value="CAB12657.1"/>
    <property type="molecule type" value="Genomic_DNA"/>
</dbReference>
<dbReference type="PIR" id="D69803">
    <property type="entry name" value="D69803"/>
</dbReference>
<dbReference type="RefSeq" id="NP_388709.1">
    <property type="nucleotide sequence ID" value="NC_000964.3"/>
</dbReference>
<dbReference type="RefSeq" id="WP_010886447.1">
    <property type="nucleotide sequence ID" value="NZ_OZ025638.1"/>
</dbReference>
<dbReference type="SMR" id="P94437"/>
<dbReference type="FunCoup" id="P94437">
    <property type="interactions" value="48"/>
</dbReference>
<dbReference type="STRING" id="224308.BSU08280"/>
<dbReference type="PaxDb" id="224308-BSU08280"/>
<dbReference type="EnsemblBacteria" id="CAB12657">
    <property type="protein sequence ID" value="CAB12657"/>
    <property type="gene ID" value="BSU_08280"/>
</dbReference>
<dbReference type="GeneID" id="936177"/>
<dbReference type="KEGG" id="bsu:BSU08280"/>
<dbReference type="PATRIC" id="fig|224308.43.peg.867"/>
<dbReference type="eggNOG" id="COG0673">
    <property type="taxonomic scope" value="Bacteria"/>
</dbReference>
<dbReference type="InParanoid" id="P94437"/>
<dbReference type="OrthoDB" id="9815825at2"/>
<dbReference type="PhylomeDB" id="P94437"/>
<dbReference type="BioCyc" id="BSUB:BSU08280-MONOMER"/>
<dbReference type="Proteomes" id="UP000001570">
    <property type="component" value="Chromosome"/>
</dbReference>
<dbReference type="GO" id="GO:0000166">
    <property type="term" value="F:nucleotide binding"/>
    <property type="evidence" value="ECO:0007669"/>
    <property type="project" value="InterPro"/>
</dbReference>
<dbReference type="GO" id="GO:0016491">
    <property type="term" value="F:oxidoreductase activity"/>
    <property type="evidence" value="ECO:0007669"/>
    <property type="project" value="UniProtKB-KW"/>
</dbReference>
<dbReference type="Gene3D" id="3.30.360.10">
    <property type="entry name" value="Dihydrodipicolinate Reductase, domain 2"/>
    <property type="match status" value="1"/>
</dbReference>
<dbReference type="Gene3D" id="3.40.50.720">
    <property type="entry name" value="NAD(P)-binding Rossmann-like Domain"/>
    <property type="match status" value="1"/>
</dbReference>
<dbReference type="InterPro" id="IPR004104">
    <property type="entry name" value="Gfo/Idh/MocA-like_OxRdtase_C"/>
</dbReference>
<dbReference type="InterPro" id="IPR000683">
    <property type="entry name" value="Gfo/Idh/MocA-like_OxRdtase_N"/>
</dbReference>
<dbReference type="InterPro" id="IPR051317">
    <property type="entry name" value="Gfo/Idh/MocA_oxidoreduct"/>
</dbReference>
<dbReference type="InterPro" id="IPR036291">
    <property type="entry name" value="NAD(P)-bd_dom_sf"/>
</dbReference>
<dbReference type="PANTHER" id="PTHR43708">
    <property type="entry name" value="CONSERVED EXPRESSED OXIDOREDUCTASE (EUROFUNG)"/>
    <property type="match status" value="1"/>
</dbReference>
<dbReference type="PANTHER" id="PTHR43708:SF3">
    <property type="entry name" value="OXIDOREDUCTASE"/>
    <property type="match status" value="1"/>
</dbReference>
<dbReference type="Pfam" id="PF01408">
    <property type="entry name" value="GFO_IDH_MocA"/>
    <property type="match status" value="1"/>
</dbReference>
<dbReference type="Pfam" id="PF02894">
    <property type="entry name" value="GFO_IDH_MocA_C"/>
    <property type="match status" value="1"/>
</dbReference>
<dbReference type="SUPFAM" id="SSF55347">
    <property type="entry name" value="Glyceraldehyde-3-phosphate dehydrogenase-like, C-terminal domain"/>
    <property type="match status" value="1"/>
</dbReference>
<dbReference type="SUPFAM" id="SSF51735">
    <property type="entry name" value="NAD(P)-binding Rossmann-fold domains"/>
    <property type="match status" value="1"/>
</dbReference>
<reference key="1">
    <citation type="journal article" date="1996" name="Gene">
        <title>The Bacillus subtilis chromosome region near 78 degrees contains the genes encoding a new two-component system, three ABC transporters and a lipase.</title>
        <authorList>
            <person name="Yamamoto H."/>
            <person name="Uchiyama S."/>
            <person name="Sekiguchi J."/>
        </authorList>
    </citation>
    <scope>NUCLEOTIDE SEQUENCE [GENOMIC DNA]</scope>
    <source>
        <strain>168 / AC327</strain>
    </source>
</reference>
<reference key="2">
    <citation type="journal article" date="1997" name="Nature">
        <title>The complete genome sequence of the Gram-positive bacterium Bacillus subtilis.</title>
        <authorList>
            <person name="Kunst F."/>
            <person name="Ogasawara N."/>
            <person name="Moszer I."/>
            <person name="Albertini A.M."/>
            <person name="Alloni G."/>
            <person name="Azevedo V."/>
            <person name="Bertero M.G."/>
            <person name="Bessieres P."/>
            <person name="Bolotin A."/>
            <person name="Borchert S."/>
            <person name="Borriss R."/>
            <person name="Boursier L."/>
            <person name="Brans A."/>
            <person name="Braun M."/>
            <person name="Brignell S.C."/>
            <person name="Bron S."/>
            <person name="Brouillet S."/>
            <person name="Bruschi C.V."/>
            <person name="Caldwell B."/>
            <person name="Capuano V."/>
            <person name="Carter N.M."/>
            <person name="Choi S.-K."/>
            <person name="Codani J.-J."/>
            <person name="Connerton I.F."/>
            <person name="Cummings N.J."/>
            <person name="Daniel R.A."/>
            <person name="Denizot F."/>
            <person name="Devine K.M."/>
            <person name="Duesterhoeft A."/>
            <person name="Ehrlich S.D."/>
            <person name="Emmerson P.T."/>
            <person name="Entian K.-D."/>
            <person name="Errington J."/>
            <person name="Fabret C."/>
            <person name="Ferrari E."/>
            <person name="Foulger D."/>
            <person name="Fritz C."/>
            <person name="Fujita M."/>
            <person name="Fujita Y."/>
            <person name="Fuma S."/>
            <person name="Galizzi A."/>
            <person name="Galleron N."/>
            <person name="Ghim S.-Y."/>
            <person name="Glaser P."/>
            <person name="Goffeau A."/>
            <person name="Golightly E.J."/>
            <person name="Grandi G."/>
            <person name="Guiseppi G."/>
            <person name="Guy B.J."/>
            <person name="Haga K."/>
            <person name="Haiech J."/>
            <person name="Harwood C.R."/>
            <person name="Henaut A."/>
            <person name="Hilbert H."/>
            <person name="Holsappel S."/>
            <person name="Hosono S."/>
            <person name="Hullo M.-F."/>
            <person name="Itaya M."/>
            <person name="Jones L.-M."/>
            <person name="Joris B."/>
            <person name="Karamata D."/>
            <person name="Kasahara Y."/>
            <person name="Klaerr-Blanchard M."/>
            <person name="Klein C."/>
            <person name="Kobayashi Y."/>
            <person name="Koetter P."/>
            <person name="Koningstein G."/>
            <person name="Krogh S."/>
            <person name="Kumano M."/>
            <person name="Kurita K."/>
            <person name="Lapidus A."/>
            <person name="Lardinois S."/>
            <person name="Lauber J."/>
            <person name="Lazarevic V."/>
            <person name="Lee S.-M."/>
            <person name="Levine A."/>
            <person name="Liu H."/>
            <person name="Masuda S."/>
            <person name="Mauel C."/>
            <person name="Medigue C."/>
            <person name="Medina N."/>
            <person name="Mellado R.P."/>
            <person name="Mizuno M."/>
            <person name="Moestl D."/>
            <person name="Nakai S."/>
            <person name="Noback M."/>
            <person name="Noone D."/>
            <person name="O'Reilly M."/>
            <person name="Ogawa K."/>
            <person name="Ogiwara A."/>
            <person name="Oudega B."/>
            <person name="Park S.-H."/>
            <person name="Parro V."/>
            <person name="Pohl T.M."/>
            <person name="Portetelle D."/>
            <person name="Porwollik S."/>
            <person name="Prescott A.M."/>
            <person name="Presecan E."/>
            <person name="Pujic P."/>
            <person name="Purnelle B."/>
            <person name="Rapoport G."/>
            <person name="Rey M."/>
            <person name="Reynolds S."/>
            <person name="Rieger M."/>
            <person name="Rivolta C."/>
            <person name="Rocha E."/>
            <person name="Roche B."/>
            <person name="Rose M."/>
            <person name="Sadaie Y."/>
            <person name="Sato T."/>
            <person name="Scanlan E."/>
            <person name="Schleich S."/>
            <person name="Schroeter R."/>
            <person name="Scoffone F."/>
            <person name="Sekiguchi J."/>
            <person name="Sekowska A."/>
            <person name="Seror S.J."/>
            <person name="Serror P."/>
            <person name="Shin B.-S."/>
            <person name="Soldo B."/>
            <person name="Sorokin A."/>
            <person name="Tacconi E."/>
            <person name="Takagi T."/>
            <person name="Takahashi H."/>
            <person name="Takemaru K."/>
            <person name="Takeuchi M."/>
            <person name="Tamakoshi A."/>
            <person name="Tanaka T."/>
            <person name="Terpstra P."/>
            <person name="Tognoni A."/>
            <person name="Tosato V."/>
            <person name="Uchiyama S."/>
            <person name="Vandenbol M."/>
            <person name="Vannier F."/>
            <person name="Vassarotti A."/>
            <person name="Viari A."/>
            <person name="Wambutt R."/>
            <person name="Wedler E."/>
            <person name="Wedler H."/>
            <person name="Weitzenegger T."/>
            <person name="Winters P."/>
            <person name="Wipat A."/>
            <person name="Yamamoto H."/>
            <person name="Yamane K."/>
            <person name="Yasumoto K."/>
            <person name="Yata K."/>
            <person name="Yoshida K."/>
            <person name="Yoshikawa H.-F."/>
            <person name="Zumstein E."/>
            <person name="Yoshikawa H."/>
            <person name="Danchin A."/>
        </authorList>
    </citation>
    <scope>NUCLEOTIDE SEQUENCE [LARGE SCALE GENOMIC DNA]</scope>
    <source>
        <strain>168</strain>
    </source>
</reference>
<sequence>MMLNGERIISKPLRWAMVGGGRLSQVGYKHRIGALRDNTAFQLTAGAFDIDAERGKDFGVNLGVDAERCYPNYQTMFAEEAKRQDGIEVVSIATPNGTHYEICKAALEAGVHVICEKPLFFTSAEGQEIKALAEKKGKIVGVTYGFSGNQMLLQMRAMIEQGMIGDIRVVDLQYTHGFCATDEGEKISAAQKWRVDPAIAGPSFVLGDLSTHTYYMSQLIMPKMKIKELLCDRQSFVGSRAPLEDNAHVLMHYENGAVGTMWTSSINAGCMDGHRIRIVGSKASIEWWDSKPNELTYEVQGEPGQTLVRGMPYLDDVCNADERLGALHSEGLSEAWANIYLKFAIAIDAKNREDEEILNNLVYPDIDAGIEGIRWIENCVRSANQGSVWVEFK</sequence>